<protein>
    <recommendedName>
        <fullName evidence="1">Elongation factor Ts</fullName>
        <shortName evidence="1">EF-Ts</shortName>
    </recommendedName>
</protein>
<sequence length="305" mass="31491">MSISASLVKELRDLTGAGMMDCKAALAATEGKIEAAVDWLRAKGIAKADKKAGRTAAEGLVGVAASGNKAVVVEVNSETDFVARNDAFQELVRKIAQAALSTDGSSEAVANANVDGKTVTEAAKDAVATIGENISFRRSAALSVPQGVVATYIHNGVADGLGKLGVLVAIETAGDAEAAQAFGRQVAMHVAAVNPLALTSADVNPEAAEREKAIFIDQARQSGKPDNIIEKMVEGRMRKFYEEVVLLSQAFVINPDLTVEAALKDAEKAIGAPAKITGFARIALGEGIEKEESDFAAEVAAAAKG</sequence>
<keyword id="KW-0963">Cytoplasm</keyword>
<keyword id="KW-0251">Elongation factor</keyword>
<keyword id="KW-0648">Protein biosynthesis</keyword>
<name>EFTS_BRUO2</name>
<comment type="function">
    <text evidence="1">Associates with the EF-Tu.GDP complex and induces the exchange of GDP to GTP. It remains bound to the aminoacyl-tRNA.EF-Tu.GTP complex up to the GTP hydrolysis stage on the ribosome.</text>
</comment>
<comment type="subcellular location">
    <subcellularLocation>
        <location evidence="1">Cytoplasm</location>
    </subcellularLocation>
</comment>
<comment type="similarity">
    <text evidence="1">Belongs to the EF-Ts family.</text>
</comment>
<organism>
    <name type="scientific">Brucella ovis (strain ATCC 25840 / 63/290 / NCTC 10512)</name>
    <dbReference type="NCBI Taxonomy" id="444178"/>
    <lineage>
        <taxon>Bacteria</taxon>
        <taxon>Pseudomonadati</taxon>
        <taxon>Pseudomonadota</taxon>
        <taxon>Alphaproteobacteria</taxon>
        <taxon>Hyphomicrobiales</taxon>
        <taxon>Brucellaceae</taxon>
        <taxon>Brucella/Ochrobactrum group</taxon>
        <taxon>Brucella</taxon>
    </lineage>
</organism>
<reference key="1">
    <citation type="journal article" date="2009" name="PLoS ONE">
        <title>Genome degradation in Brucella ovis corresponds with narrowing of its host range and tissue tropism.</title>
        <authorList>
            <person name="Tsolis R.M."/>
            <person name="Seshadri R."/>
            <person name="Santos R.L."/>
            <person name="Sangari F.J."/>
            <person name="Lobo J.M."/>
            <person name="de Jong M.F."/>
            <person name="Ren Q."/>
            <person name="Myers G."/>
            <person name="Brinkac L.M."/>
            <person name="Nelson W.C."/>
            <person name="Deboy R.T."/>
            <person name="Angiuoli S."/>
            <person name="Khouri H."/>
            <person name="Dimitrov G."/>
            <person name="Robinson J.R."/>
            <person name="Mulligan S."/>
            <person name="Walker R.L."/>
            <person name="Elzer P.E."/>
            <person name="Hassan K.A."/>
            <person name="Paulsen I.T."/>
        </authorList>
    </citation>
    <scope>NUCLEOTIDE SEQUENCE [LARGE SCALE GENOMIC DNA]</scope>
    <source>
        <strain>ATCC 25840 / 63/290 / NCTC 10512</strain>
    </source>
</reference>
<accession>A5VQT2</accession>
<dbReference type="EMBL" id="CP000708">
    <property type="protein sequence ID" value="ABQ61203.1"/>
    <property type="molecule type" value="Genomic_DNA"/>
</dbReference>
<dbReference type="RefSeq" id="WP_002964288.1">
    <property type="nucleotide sequence ID" value="NC_009505.1"/>
</dbReference>
<dbReference type="SMR" id="A5VQT2"/>
<dbReference type="GeneID" id="93016505"/>
<dbReference type="KEGG" id="bov:BOV_1118"/>
<dbReference type="HOGENOM" id="CLU_047155_2_0_5"/>
<dbReference type="PhylomeDB" id="A5VQT2"/>
<dbReference type="Proteomes" id="UP000006383">
    <property type="component" value="Chromosome I"/>
</dbReference>
<dbReference type="GO" id="GO:0005737">
    <property type="term" value="C:cytoplasm"/>
    <property type="evidence" value="ECO:0007669"/>
    <property type="project" value="UniProtKB-SubCell"/>
</dbReference>
<dbReference type="GO" id="GO:0003746">
    <property type="term" value="F:translation elongation factor activity"/>
    <property type="evidence" value="ECO:0007669"/>
    <property type="project" value="UniProtKB-UniRule"/>
</dbReference>
<dbReference type="CDD" id="cd14275">
    <property type="entry name" value="UBA_EF-Ts"/>
    <property type="match status" value="1"/>
</dbReference>
<dbReference type="FunFam" id="1.10.286.20:FF:000001">
    <property type="entry name" value="Elongation factor Ts"/>
    <property type="match status" value="1"/>
</dbReference>
<dbReference type="FunFam" id="1.10.8.10:FF:000001">
    <property type="entry name" value="Elongation factor Ts"/>
    <property type="match status" value="1"/>
</dbReference>
<dbReference type="Gene3D" id="1.10.286.20">
    <property type="match status" value="1"/>
</dbReference>
<dbReference type="Gene3D" id="1.10.8.10">
    <property type="entry name" value="DNA helicase RuvA subunit, C-terminal domain"/>
    <property type="match status" value="1"/>
</dbReference>
<dbReference type="Gene3D" id="3.30.479.20">
    <property type="entry name" value="Elongation factor Ts, dimerisation domain"/>
    <property type="match status" value="2"/>
</dbReference>
<dbReference type="HAMAP" id="MF_00050">
    <property type="entry name" value="EF_Ts"/>
    <property type="match status" value="1"/>
</dbReference>
<dbReference type="InterPro" id="IPR036402">
    <property type="entry name" value="EF-Ts_dimer_sf"/>
</dbReference>
<dbReference type="InterPro" id="IPR001816">
    <property type="entry name" value="Transl_elong_EFTs/EF1B"/>
</dbReference>
<dbReference type="InterPro" id="IPR014039">
    <property type="entry name" value="Transl_elong_EFTs/EF1B_dimer"/>
</dbReference>
<dbReference type="InterPro" id="IPR018101">
    <property type="entry name" value="Transl_elong_Ts_CS"/>
</dbReference>
<dbReference type="InterPro" id="IPR009060">
    <property type="entry name" value="UBA-like_sf"/>
</dbReference>
<dbReference type="NCBIfam" id="TIGR00116">
    <property type="entry name" value="tsf"/>
    <property type="match status" value="1"/>
</dbReference>
<dbReference type="PANTHER" id="PTHR11741">
    <property type="entry name" value="ELONGATION FACTOR TS"/>
    <property type="match status" value="1"/>
</dbReference>
<dbReference type="PANTHER" id="PTHR11741:SF0">
    <property type="entry name" value="ELONGATION FACTOR TS, MITOCHONDRIAL"/>
    <property type="match status" value="1"/>
</dbReference>
<dbReference type="Pfam" id="PF00889">
    <property type="entry name" value="EF_TS"/>
    <property type="match status" value="1"/>
</dbReference>
<dbReference type="SUPFAM" id="SSF54713">
    <property type="entry name" value="Elongation factor Ts (EF-Ts), dimerisation domain"/>
    <property type="match status" value="2"/>
</dbReference>
<dbReference type="SUPFAM" id="SSF46934">
    <property type="entry name" value="UBA-like"/>
    <property type="match status" value="1"/>
</dbReference>
<dbReference type="PROSITE" id="PS01127">
    <property type="entry name" value="EF_TS_2"/>
    <property type="match status" value="1"/>
</dbReference>
<evidence type="ECO:0000255" key="1">
    <source>
        <dbReference type="HAMAP-Rule" id="MF_00050"/>
    </source>
</evidence>
<feature type="chain" id="PRO_1000006059" description="Elongation factor Ts">
    <location>
        <begin position="1"/>
        <end position="305"/>
    </location>
</feature>
<feature type="region of interest" description="Involved in Mg(2+) ion dislocation from EF-Tu" evidence="1">
    <location>
        <begin position="79"/>
        <end position="82"/>
    </location>
</feature>
<gene>
    <name evidence="1" type="primary">tsf</name>
    <name type="ordered locus">BOV_1118</name>
</gene>
<proteinExistence type="inferred from homology"/>